<feature type="chain" id="PRO_0000136522" description="Phosphoheptose isomerase 1">
    <location>
        <begin position="1"/>
        <end position="186"/>
    </location>
</feature>
<feature type="domain" description="SIS">
    <location>
        <begin position="33"/>
        <end position="186"/>
    </location>
</feature>
<feature type="binding site" evidence="1">
    <location>
        <begin position="48"/>
        <end position="50"/>
    </location>
    <ligand>
        <name>substrate</name>
    </ligand>
</feature>
<feature type="binding site" evidence="1">
    <location>
        <position position="57"/>
    </location>
    <ligand>
        <name>Zn(2+)</name>
        <dbReference type="ChEBI" id="CHEBI:29105"/>
    </ligand>
</feature>
<feature type="binding site" evidence="1">
    <location>
        <position position="61"/>
    </location>
    <ligand>
        <name>substrate</name>
    </ligand>
</feature>
<feature type="binding site" evidence="1">
    <location>
        <position position="61"/>
    </location>
    <ligand>
        <name>Zn(2+)</name>
        <dbReference type="ChEBI" id="CHEBI:29105"/>
    </ligand>
</feature>
<feature type="binding site" evidence="1">
    <location>
        <begin position="90"/>
        <end position="91"/>
    </location>
    <ligand>
        <name>substrate</name>
    </ligand>
</feature>
<feature type="binding site" evidence="1">
    <location>
        <begin position="116"/>
        <end position="118"/>
    </location>
    <ligand>
        <name>substrate</name>
    </ligand>
</feature>
<feature type="binding site" evidence="1">
    <location>
        <position position="121"/>
    </location>
    <ligand>
        <name>substrate</name>
    </ligand>
</feature>
<feature type="binding site" evidence="1">
    <location>
        <position position="168"/>
    </location>
    <ligand>
        <name>substrate</name>
    </ligand>
</feature>
<feature type="binding site" evidence="1">
    <location>
        <position position="168"/>
    </location>
    <ligand>
        <name>Zn(2+)</name>
        <dbReference type="ChEBI" id="CHEBI:29105"/>
    </ligand>
</feature>
<feature type="binding site" evidence="1">
    <location>
        <position position="176"/>
    </location>
    <ligand>
        <name>Zn(2+)</name>
        <dbReference type="ChEBI" id="CHEBI:29105"/>
    </ligand>
</feature>
<feature type="sequence conflict" description="In Ref. 2; AAR82882." evidence="2" ref="2">
    <original>V</original>
    <variation>A</variation>
    <location>
        <position position="16"/>
    </location>
</feature>
<feature type="sequence conflict" description="In Ref. 1; AAR99164 and 2; AAR82882." evidence="2" ref="1 2">
    <original>A</original>
    <variation>E</variation>
    <location>
        <position position="18"/>
    </location>
</feature>
<feature type="sequence conflict" description="In Ref. 1; AAR99164." evidence="2" ref="1">
    <original>E</original>
    <variation>D</variation>
    <location>
        <position position="31"/>
    </location>
</feature>
<feature type="sequence conflict" description="In Ref. 1; AAR99164 and 2; AAR82882." evidence="2" ref="1 2">
    <original>K</original>
    <variation>N</variation>
    <location>
        <position position="109"/>
    </location>
</feature>
<feature type="sequence conflict" description="In Ref. 1; AAR99164 and 2; AAR82882." evidence="2" ref="1 2">
    <original>L</original>
    <variation>F</variation>
    <location>
        <position position="128"/>
    </location>
</feature>
<feature type="helix" evidence="3">
    <location>
        <begin position="2"/>
        <end position="18"/>
    </location>
</feature>
<feature type="helix" evidence="3">
    <location>
        <begin position="19"/>
        <end position="22"/>
    </location>
</feature>
<feature type="helix" evidence="3">
    <location>
        <begin position="23"/>
        <end position="38"/>
    </location>
</feature>
<feature type="strand" evidence="3">
    <location>
        <begin position="43"/>
        <end position="48"/>
    </location>
</feature>
<feature type="helix" evidence="3">
    <location>
        <begin position="50"/>
        <end position="63"/>
    </location>
</feature>
<feature type="strand" evidence="3">
    <location>
        <begin position="66"/>
        <end position="68"/>
    </location>
</feature>
<feature type="strand" evidence="3">
    <location>
        <begin position="75"/>
        <end position="79"/>
    </location>
</feature>
<feature type="helix" evidence="3">
    <location>
        <begin position="82"/>
        <end position="91"/>
    </location>
</feature>
<feature type="helix" evidence="3">
    <location>
        <begin position="94"/>
        <end position="96"/>
    </location>
</feature>
<feature type="helix" evidence="3">
    <location>
        <begin position="97"/>
        <end position="105"/>
    </location>
</feature>
<feature type="strand" evidence="3">
    <location>
        <begin position="111"/>
        <end position="115"/>
    </location>
</feature>
<feature type="strand" evidence="3">
    <location>
        <begin position="117"/>
        <end position="119"/>
    </location>
</feature>
<feature type="helix" evidence="3">
    <location>
        <begin position="122"/>
        <end position="133"/>
    </location>
</feature>
<feature type="strand" evidence="3">
    <location>
        <begin position="137"/>
        <end position="143"/>
    </location>
</feature>
<feature type="helix" evidence="3">
    <location>
        <begin position="144"/>
        <end position="148"/>
    </location>
</feature>
<feature type="helix" evidence="3">
    <location>
        <begin position="149"/>
        <end position="152"/>
    </location>
</feature>
<feature type="strand" evidence="3">
    <location>
        <begin position="154"/>
        <end position="160"/>
    </location>
</feature>
<feature type="helix" evidence="3">
    <location>
        <begin position="164"/>
        <end position="185"/>
    </location>
</feature>
<dbReference type="EC" id="5.3.1.28"/>
<dbReference type="EMBL" id="AF167344">
    <property type="protein sequence ID" value="AAR99164.1"/>
    <property type="molecule type" value="Genomic_DNA"/>
</dbReference>
<dbReference type="EMBL" id="AY422197">
    <property type="protein sequence ID" value="AAR82882.1"/>
    <property type="molecule type" value="Genomic_DNA"/>
</dbReference>
<dbReference type="EMBL" id="AL111168">
    <property type="protein sequence ID" value="CAL35264.1"/>
    <property type="molecule type" value="Genomic_DNA"/>
</dbReference>
<dbReference type="PIR" id="G81319">
    <property type="entry name" value="G81319"/>
</dbReference>
<dbReference type="RefSeq" id="WP_002858021.1">
    <property type="nucleotide sequence ID" value="NZ_SZUC01000001.1"/>
</dbReference>
<dbReference type="RefSeq" id="YP_002344540.1">
    <property type="nucleotide sequence ID" value="NC_002163.1"/>
</dbReference>
<dbReference type="PDB" id="1TK9">
    <property type="method" value="X-ray"/>
    <property type="resolution" value="2.10 A"/>
    <property type="chains" value="A/B/C/D=2-186"/>
</dbReference>
<dbReference type="PDBsum" id="1TK9"/>
<dbReference type="SMR" id="Q9PNE6"/>
<dbReference type="IntAct" id="Q9PNE6">
    <property type="interactions" value="103"/>
</dbReference>
<dbReference type="STRING" id="192222.Cj1149c"/>
<dbReference type="PaxDb" id="192222-Cj1149c"/>
<dbReference type="EnsemblBacteria" id="CAL35264">
    <property type="protein sequence ID" value="CAL35264"/>
    <property type="gene ID" value="Cj1149c"/>
</dbReference>
<dbReference type="GeneID" id="905439"/>
<dbReference type="KEGG" id="cje:Cj1149c"/>
<dbReference type="PATRIC" id="fig|192222.6.peg.1130"/>
<dbReference type="eggNOG" id="COG0279">
    <property type="taxonomic scope" value="Bacteria"/>
</dbReference>
<dbReference type="HOGENOM" id="CLU_080999_4_0_7"/>
<dbReference type="OrthoDB" id="9810929at2"/>
<dbReference type="BRENDA" id="5.3.1.28">
    <property type="organism ID" value="1087"/>
</dbReference>
<dbReference type="UniPathway" id="UPA00041">
    <property type="reaction ID" value="UER00436"/>
</dbReference>
<dbReference type="UniPathway" id="UPA00976"/>
<dbReference type="EvolutionaryTrace" id="Q9PNE6"/>
<dbReference type="Proteomes" id="UP000000799">
    <property type="component" value="Chromosome"/>
</dbReference>
<dbReference type="GO" id="GO:0005737">
    <property type="term" value="C:cytoplasm"/>
    <property type="evidence" value="ECO:0007669"/>
    <property type="project" value="UniProtKB-SubCell"/>
</dbReference>
<dbReference type="GO" id="GO:0097367">
    <property type="term" value="F:carbohydrate derivative binding"/>
    <property type="evidence" value="ECO:0007669"/>
    <property type="project" value="InterPro"/>
</dbReference>
<dbReference type="GO" id="GO:0008968">
    <property type="term" value="F:D-sedoheptulose 7-phosphate isomerase activity"/>
    <property type="evidence" value="ECO:0007669"/>
    <property type="project" value="UniProtKB-UniRule"/>
</dbReference>
<dbReference type="GO" id="GO:0008270">
    <property type="term" value="F:zinc ion binding"/>
    <property type="evidence" value="ECO:0007669"/>
    <property type="project" value="UniProtKB-UniRule"/>
</dbReference>
<dbReference type="GO" id="GO:0005975">
    <property type="term" value="P:carbohydrate metabolic process"/>
    <property type="evidence" value="ECO:0007669"/>
    <property type="project" value="UniProtKB-UniRule"/>
</dbReference>
<dbReference type="GO" id="GO:2001061">
    <property type="term" value="P:D-glycero-D-manno-heptose 7-phosphate biosynthetic process"/>
    <property type="evidence" value="ECO:0007669"/>
    <property type="project" value="UniProtKB-UniPathway"/>
</dbReference>
<dbReference type="CDD" id="cd05006">
    <property type="entry name" value="SIS_GmhA"/>
    <property type="match status" value="1"/>
</dbReference>
<dbReference type="Gene3D" id="3.40.50.10490">
    <property type="entry name" value="Glucose-6-phosphate isomerase like protein, domain 1"/>
    <property type="match status" value="1"/>
</dbReference>
<dbReference type="HAMAP" id="MF_00067">
    <property type="entry name" value="GmhA"/>
    <property type="match status" value="1"/>
</dbReference>
<dbReference type="InterPro" id="IPR035461">
    <property type="entry name" value="GmhA/DiaA"/>
</dbReference>
<dbReference type="InterPro" id="IPR004515">
    <property type="entry name" value="Phosphoheptose_Isoase"/>
</dbReference>
<dbReference type="InterPro" id="IPR001347">
    <property type="entry name" value="SIS_dom"/>
</dbReference>
<dbReference type="InterPro" id="IPR046348">
    <property type="entry name" value="SIS_dom_sf"/>
</dbReference>
<dbReference type="InterPro" id="IPR050099">
    <property type="entry name" value="SIS_GmhA/DiaA_subfam"/>
</dbReference>
<dbReference type="NCBIfam" id="TIGR00441">
    <property type="entry name" value="gmhA"/>
    <property type="match status" value="1"/>
</dbReference>
<dbReference type="PANTHER" id="PTHR30390:SF6">
    <property type="entry name" value="DNAA INITIATOR-ASSOCIATING PROTEIN DIAA"/>
    <property type="match status" value="1"/>
</dbReference>
<dbReference type="PANTHER" id="PTHR30390">
    <property type="entry name" value="SEDOHEPTULOSE 7-PHOSPHATE ISOMERASE / DNAA INITIATOR-ASSOCIATING FACTOR FOR REPLICATION INITIATION"/>
    <property type="match status" value="1"/>
</dbReference>
<dbReference type="Pfam" id="PF13580">
    <property type="entry name" value="SIS_2"/>
    <property type="match status" value="1"/>
</dbReference>
<dbReference type="SUPFAM" id="SSF53697">
    <property type="entry name" value="SIS domain"/>
    <property type="match status" value="1"/>
</dbReference>
<dbReference type="PROSITE" id="PS51464">
    <property type="entry name" value="SIS"/>
    <property type="match status" value="1"/>
</dbReference>
<organism>
    <name type="scientific">Campylobacter jejuni subsp. jejuni serotype O:2 (strain ATCC 700819 / NCTC 11168)</name>
    <dbReference type="NCBI Taxonomy" id="192222"/>
    <lineage>
        <taxon>Bacteria</taxon>
        <taxon>Pseudomonadati</taxon>
        <taxon>Campylobacterota</taxon>
        <taxon>Epsilonproteobacteria</taxon>
        <taxon>Campylobacterales</taxon>
        <taxon>Campylobacteraceae</taxon>
        <taxon>Campylobacter</taxon>
    </lineage>
</organism>
<accession>Q9PNE6</accession>
<accession>Q0P9A7</accession>
<accession>Q6TG10</accession>
<accession>Q7BPS4</accession>
<gene>
    <name type="primary">gmhA1</name>
    <name type="synonym">gmhA</name>
    <name type="ordered locus">Cj1149c</name>
</gene>
<proteinExistence type="evidence at protein level"/>
<keyword id="KW-0002">3D-structure</keyword>
<keyword id="KW-0119">Carbohydrate metabolism</keyword>
<keyword id="KW-0963">Cytoplasm</keyword>
<keyword id="KW-0413">Isomerase</keyword>
<keyword id="KW-0479">Metal-binding</keyword>
<keyword id="KW-1185">Reference proteome</keyword>
<keyword id="KW-0862">Zinc</keyword>
<sequence>MINLVEKEWQEHQKIVQASEILKGQIAKVGELLCECLKKGGKILICGNGGSAADAQHFAAELSGRYKKERKALAGIALTTDTSALSAIGNDYGFEFVFSRQVEALGNEKDVLIGISTSGKSPNVLEALKKAKELNMLCLGLSGKGGGMMNKLCDHNLVVPSDDTARIQEMHILIIHTLCQIIDESF</sequence>
<evidence type="ECO:0000250" key="1"/>
<evidence type="ECO:0000305" key="2"/>
<evidence type="ECO:0007829" key="3">
    <source>
        <dbReference type="PDB" id="1TK9"/>
    </source>
</evidence>
<protein>
    <recommendedName>
        <fullName>Phosphoheptose isomerase 1</fullName>
        <ecNumber>5.3.1.28</ecNumber>
    </recommendedName>
    <alternativeName>
        <fullName>Sedoheptulose 7-phosphate isomerase 1</fullName>
    </alternativeName>
</protein>
<name>GMHA1_CAMJE</name>
<comment type="function">
    <text evidence="1">Catalyzes the isomerization of sedoheptulose 7-phosphate in D-glycero-D-manno-heptose 7-phosphate.</text>
</comment>
<comment type="catalytic activity">
    <reaction>
        <text>2 D-sedoheptulose 7-phosphate = D-glycero-alpha-D-manno-heptose 7-phosphate + D-glycero-beta-D-manno-heptose 7-phosphate</text>
        <dbReference type="Rhea" id="RHEA:27489"/>
        <dbReference type="ChEBI" id="CHEBI:57483"/>
        <dbReference type="ChEBI" id="CHEBI:60203"/>
        <dbReference type="ChEBI" id="CHEBI:60204"/>
        <dbReference type="EC" id="5.3.1.28"/>
    </reaction>
</comment>
<comment type="cofactor">
    <cofactor evidence="1">
        <name>Zn(2+)</name>
        <dbReference type="ChEBI" id="CHEBI:29105"/>
    </cofactor>
    <text evidence="1">Binds 1 zinc ion per subunit.</text>
</comment>
<comment type="pathway">
    <text>Carbohydrate biosynthesis; D-glycero-D-manno-heptose 7-phosphate biosynthesis; D-glycero-alpha-D-manno-heptose 7-phosphate and D-glycero-beta-D-manno-heptose 7-phosphate from sedoheptulose 7-phosphate: step 1/1.</text>
</comment>
<comment type="pathway">
    <text>Bacterial outer membrane biogenesis; LOS core biosynthesis.</text>
</comment>
<comment type="subunit">
    <text evidence="1">Homotetramer.</text>
</comment>
<comment type="subcellular location">
    <subcellularLocation>
        <location evidence="1">Cytoplasm</location>
    </subcellularLocation>
</comment>
<comment type="miscellaneous">
    <text evidence="1">The reaction produces a racemic mixture of D-glycero-alpha-D-manno-heptose 7-phosphate and D-glycero-beta-D-manno-heptose 7-phosphate.</text>
</comment>
<comment type="similarity">
    <text evidence="2">Belongs to the SIS family. GmhA subfamily.</text>
</comment>
<reference key="1">
    <citation type="submission" date="2004-01" db="EMBL/GenBank/DDBJ databases">
        <authorList>
            <person name="Gilbert M."/>
        </authorList>
    </citation>
    <scope>NUCLEOTIDE SEQUENCE [GENOMIC DNA]</scope>
    <source>
        <strain>ATCC 43446 / MK104 / Serotype O:19</strain>
    </source>
</reference>
<reference key="2">
    <citation type="journal article" date="2004" name="Infect. Immun.">
        <title>Evidence for acquisition of the lipooligosaccharide biosynthesis locus in Campylobacter jejuni GB11, a strain isolated from a patient with Guillain-Barre syndrome, by horizontal exchange.</title>
        <authorList>
            <person name="Gilbert M."/>
            <person name="Godschalk P.C."/>
            <person name="Karwaski M.-F."/>
            <person name="Ang C.W."/>
            <person name="Van Belkum A."/>
            <person name="Li J."/>
            <person name="Wakarchuk W.W."/>
            <person name="Endtz H.P."/>
        </authorList>
    </citation>
    <scope>NUCLEOTIDE SEQUENCE [GENOMIC DNA]</scope>
    <source>
        <strain>GB11</strain>
    </source>
</reference>
<reference key="3">
    <citation type="journal article" date="2000" name="Nature">
        <title>The genome sequence of the food-borne pathogen Campylobacter jejuni reveals hypervariable sequences.</title>
        <authorList>
            <person name="Parkhill J."/>
            <person name="Wren B.W."/>
            <person name="Mungall K.L."/>
            <person name="Ketley J.M."/>
            <person name="Churcher C.M."/>
            <person name="Basham D."/>
            <person name="Chillingworth T."/>
            <person name="Davies R.M."/>
            <person name="Feltwell T."/>
            <person name="Holroyd S."/>
            <person name="Jagels K."/>
            <person name="Karlyshev A.V."/>
            <person name="Moule S."/>
            <person name="Pallen M.J."/>
            <person name="Penn C.W."/>
            <person name="Quail M.A."/>
            <person name="Rajandream M.A."/>
            <person name="Rutherford K.M."/>
            <person name="van Vliet A.H.M."/>
            <person name="Whitehead S."/>
            <person name="Barrell B.G."/>
        </authorList>
    </citation>
    <scope>NUCLEOTIDE SEQUENCE [LARGE SCALE GENOMIC DNA]</scope>
    <source>
        <strain>ATCC 700819 / NCTC 11168</strain>
    </source>
</reference>
<reference key="4">
    <citation type="journal article" date="2002" name="Microbiology">
        <title>Novel pathways for biosynthesis of nucleotide-activated glycero-manno-heptose precursors of bacterial glycoproteins and cell surface polysaccharides.</title>
        <authorList>
            <person name="Valvano M.A."/>
            <person name="Messner P."/>
            <person name="Kosma P."/>
        </authorList>
    </citation>
    <scope>BIOSYNTHESIS OF NUCLEOTIDE-ACTIVATED GLYCERO-MANNO-HEPTOSE</scope>
</reference>
<reference key="5">
    <citation type="journal article" date="2001" name="Curr. Opin. Microbiol.">
        <title>Deciphering Campylobacter jejuni cell surface interactions from the genome sequence.</title>
        <authorList>
            <person name="Linton D."/>
            <person name="Karlyshev A.V."/>
            <person name="Wren B.W."/>
        </authorList>
    </citation>
    <scope>CELL SURFACE</scope>
</reference>
<reference key="6">
    <citation type="journal article" date="2006" name="Proteins">
        <title>Crystal structures of two putative phosphoheptose isomerases.</title>
        <authorList>
            <person name="Seetharaman J."/>
            <person name="Rajashankar K.R."/>
            <person name="Solorzano V."/>
            <person name="Kniewel R."/>
            <person name="Lima C.D."/>
            <person name="Bonanno J.B."/>
            <person name="Burley S.K."/>
            <person name="Swaminathan S."/>
        </authorList>
    </citation>
    <scope>X-RAY CRYSTALLOGRAPHY (2.1 ANGSTROMS) OF 2-186</scope>
</reference>